<proteinExistence type="evidence at protein level"/>
<accession>A2RKA7</accession>
<feature type="chain" id="PRO_0000449273" description="Nucleoside import ATP-binding protein NupA">
    <location>
        <begin position="1"/>
        <end position="506"/>
    </location>
</feature>
<feature type="domain" description="ABC transporter 1" evidence="1">
    <location>
        <begin position="7"/>
        <end position="242"/>
    </location>
</feature>
<feature type="domain" description="ABC transporter 2" evidence="1">
    <location>
        <begin position="259"/>
        <end position="503"/>
    </location>
</feature>
<feature type="binding site" evidence="1">
    <location>
        <begin position="39"/>
        <end position="46"/>
    </location>
    <ligand>
        <name>ATP</name>
        <dbReference type="ChEBI" id="CHEBI:30616"/>
    </ligand>
</feature>
<name>NUPA_LACLM</name>
<dbReference type="EC" id="7.6.2.-" evidence="5"/>
<dbReference type="EMBL" id="AM406671">
    <property type="protein sequence ID" value="CAL97717.1"/>
    <property type="molecule type" value="Genomic_DNA"/>
</dbReference>
<dbReference type="RefSeq" id="WP_011835028.1">
    <property type="nucleotide sequence ID" value="NC_009004.1"/>
</dbReference>
<dbReference type="SMR" id="A2RKA7"/>
<dbReference type="STRING" id="416870.llmg_1123"/>
<dbReference type="TCDB" id="3.A.1.2.17">
    <property type="family name" value="the atp-binding cassette (abc) superfamily"/>
</dbReference>
<dbReference type="KEGG" id="llm:llmg_1123"/>
<dbReference type="eggNOG" id="COG3845">
    <property type="taxonomic scope" value="Bacteria"/>
</dbReference>
<dbReference type="HOGENOM" id="CLU_000604_92_0_9"/>
<dbReference type="OrthoDB" id="9771863at2"/>
<dbReference type="PhylomeDB" id="A2RKA7"/>
<dbReference type="Proteomes" id="UP000000364">
    <property type="component" value="Chromosome"/>
</dbReference>
<dbReference type="GO" id="GO:0005886">
    <property type="term" value="C:plasma membrane"/>
    <property type="evidence" value="ECO:0007669"/>
    <property type="project" value="UniProtKB-SubCell"/>
</dbReference>
<dbReference type="GO" id="GO:0005524">
    <property type="term" value="F:ATP binding"/>
    <property type="evidence" value="ECO:0007669"/>
    <property type="project" value="UniProtKB-KW"/>
</dbReference>
<dbReference type="GO" id="GO:0016887">
    <property type="term" value="F:ATP hydrolysis activity"/>
    <property type="evidence" value="ECO:0007669"/>
    <property type="project" value="InterPro"/>
</dbReference>
<dbReference type="CDD" id="cd03216">
    <property type="entry name" value="ABC_Carb_Monos_I"/>
    <property type="match status" value="1"/>
</dbReference>
<dbReference type="CDD" id="cd03215">
    <property type="entry name" value="ABC_Carb_Monos_II"/>
    <property type="match status" value="1"/>
</dbReference>
<dbReference type="FunFam" id="3.40.50.300:FF:001390">
    <property type="entry name" value="ABC transporter, ATP-binding protein"/>
    <property type="match status" value="1"/>
</dbReference>
<dbReference type="FunFam" id="3.40.50.300:FF:000127">
    <property type="entry name" value="Ribose import ATP-binding protein RbsA"/>
    <property type="match status" value="1"/>
</dbReference>
<dbReference type="Gene3D" id="3.40.50.300">
    <property type="entry name" value="P-loop containing nucleotide triphosphate hydrolases"/>
    <property type="match status" value="2"/>
</dbReference>
<dbReference type="InterPro" id="IPR003593">
    <property type="entry name" value="AAA+_ATPase"/>
</dbReference>
<dbReference type="InterPro" id="IPR050107">
    <property type="entry name" value="ABC_carbohydrate_import_ATPase"/>
</dbReference>
<dbReference type="InterPro" id="IPR003439">
    <property type="entry name" value="ABC_transporter-like_ATP-bd"/>
</dbReference>
<dbReference type="InterPro" id="IPR017871">
    <property type="entry name" value="ABC_transporter-like_CS"/>
</dbReference>
<dbReference type="InterPro" id="IPR027417">
    <property type="entry name" value="P-loop_NTPase"/>
</dbReference>
<dbReference type="PANTHER" id="PTHR43790">
    <property type="entry name" value="CARBOHYDRATE TRANSPORT ATP-BINDING PROTEIN MG119-RELATED"/>
    <property type="match status" value="1"/>
</dbReference>
<dbReference type="PANTHER" id="PTHR43790:SF4">
    <property type="entry name" value="GUANOSINE IMPORT ATP-BINDING PROTEIN NUPO"/>
    <property type="match status" value="1"/>
</dbReference>
<dbReference type="Pfam" id="PF00005">
    <property type="entry name" value="ABC_tran"/>
    <property type="match status" value="2"/>
</dbReference>
<dbReference type="SMART" id="SM00382">
    <property type="entry name" value="AAA"/>
    <property type="match status" value="2"/>
</dbReference>
<dbReference type="SUPFAM" id="SSF52540">
    <property type="entry name" value="P-loop containing nucleoside triphosphate hydrolases"/>
    <property type="match status" value="2"/>
</dbReference>
<dbReference type="PROSITE" id="PS00211">
    <property type="entry name" value="ABC_TRANSPORTER_1"/>
    <property type="match status" value="2"/>
</dbReference>
<dbReference type="PROSITE" id="PS50893">
    <property type="entry name" value="ABC_TRANSPORTER_2"/>
    <property type="match status" value="2"/>
</dbReference>
<evidence type="ECO:0000255" key="1">
    <source>
        <dbReference type="PROSITE-ProRule" id="PRU00434"/>
    </source>
</evidence>
<evidence type="ECO:0000269" key="2">
    <source>
    </source>
</evidence>
<evidence type="ECO:0000303" key="3">
    <source>
    </source>
</evidence>
<evidence type="ECO:0000305" key="4"/>
<evidence type="ECO:0000305" key="5">
    <source>
    </source>
</evidence>
<evidence type="ECO:0000312" key="6">
    <source>
        <dbReference type="EMBL" id="CAL97717.1"/>
    </source>
</evidence>
<comment type="function">
    <text evidence="2 4">Part of an ABC transporter complex involved in the uptake of all common nucleosides (PubMed:20595258). Responsible for energy coupling to the transport system (Probable).</text>
</comment>
<comment type="subunit">
    <text evidence="5">The complex is composed of two ATP-binding proteins (NupA), two transmembrane proteins (NupB and NupC) and a solute-binding protein (BmpA).</text>
</comment>
<comment type="subcellular location">
    <subcellularLocation>
        <location evidence="4">Cell membrane</location>
        <topology evidence="4">Peripheral membrane protein</topology>
    </subcellularLocation>
</comment>
<comment type="induction">
    <text evidence="2">Constitutively expressed.</text>
</comment>
<comment type="disruption phenotype">
    <text evidence="2">Mutant is unable to grow on inosine as a sole purine source. Mutant shows slower uptake of uridine. The double mutant uriP-nupA is impaired in uridine transport.</text>
</comment>
<comment type="similarity">
    <text evidence="4">Belongs to the ABC transporter superfamily.</text>
</comment>
<organism>
    <name type="scientific">Lactococcus lactis subsp. cremoris (strain MG1363)</name>
    <dbReference type="NCBI Taxonomy" id="416870"/>
    <lineage>
        <taxon>Bacteria</taxon>
        <taxon>Bacillati</taxon>
        <taxon>Bacillota</taxon>
        <taxon>Bacilli</taxon>
        <taxon>Lactobacillales</taxon>
        <taxon>Streptococcaceae</taxon>
        <taxon>Lactococcus</taxon>
        <taxon>Lactococcus cremoris subsp. cremoris</taxon>
    </lineage>
</organism>
<keyword id="KW-0067">ATP-binding</keyword>
<keyword id="KW-1003">Cell membrane</keyword>
<keyword id="KW-0472">Membrane</keyword>
<keyword id="KW-0547">Nucleotide-binding</keyword>
<keyword id="KW-0677">Repeat</keyword>
<keyword id="KW-1278">Translocase</keyword>
<keyword id="KW-0813">Transport</keyword>
<reference key="1">
    <citation type="journal article" date="2007" name="J. Bacteriol.">
        <title>The complete genome sequence of the lactic acid bacterial paradigm Lactococcus lactis subsp. cremoris MG1363.</title>
        <authorList>
            <person name="Wegmann U."/>
            <person name="O'Connell-Motherway M."/>
            <person name="Zomer A."/>
            <person name="Buist G."/>
            <person name="Shearman C."/>
            <person name="Canchaya C."/>
            <person name="Ventura M."/>
            <person name="Goesmann A."/>
            <person name="Gasson M.J."/>
            <person name="Kuipers O.P."/>
            <person name="van Sinderen D."/>
            <person name="Kok J."/>
        </authorList>
    </citation>
    <scope>NUCLEOTIDE SEQUENCE [LARGE SCALE GENOMIC DNA]</scope>
    <source>
        <strain>MG1363</strain>
    </source>
</reference>
<reference key="2">
    <citation type="journal article" date="2010" name="Microbiology">
        <title>Two nucleoside transporters in Lactococcus lactis with different substrate specificities.</title>
        <authorList>
            <person name="Martinussen J."/>
            <person name="Soerensen C."/>
            <person name="Jendresen C.B."/>
            <person name="Kilstrup M."/>
        </authorList>
    </citation>
    <scope>FUNCTION</scope>
    <scope>SUBUNIT</scope>
    <scope>INDUCTION</scope>
    <scope>DISRUPTION PHENOTYPE</scope>
    <source>
        <strain>MG1363</strain>
    </source>
</reference>
<sequence>MANETVIQMIDVTKRFGDFVANDKVNLELKKGEIHALLGENGAGKSTLMNILSGLLEPSEGEVHVKGKLENIDSPSKAANLGIGMVHQHFMLVDAFTVTENIILGNEVTKGINLDLKTAKKKILELSERYGLSVEPDALIRDISVGQQQRVEILKTLYRGADILIFDEPTAVLTPAEITELMQIMKNLIKEGKSIILITHKLDEIRAVADRITVIRRGKSIDTVELGDKTNQELAELMVGRSVSFITEKAAAQPKDVVLEIKDLNIKESRGSLKVKGLSLDVRAGEIVGVAGIDGNGQTELVKAITGLTKVDSGSIKLHNKDITNQRPRKITEQSVGHVPEDRHRDGLVLEMTVAENIALQTYYKPPMSKYGFLDYNKINSHARELMEEFDVRGAGEWVSASSLSGGNQQKAIIAREIDRNPDLLIVSQPTRGLDVGAIEYIHKRLIQARDEGKAVLVISFELDEILNVSDRIAVIHDGQIQGIVSPETTTKQELGILMVGGNINE</sequence>
<gene>
    <name evidence="3" type="primary">nupA</name>
    <name evidence="6" type="ordered locus">llmg_1123</name>
</gene>
<protein>
    <recommendedName>
        <fullName evidence="4">Nucleoside import ATP-binding protein NupA</fullName>
        <ecNumber evidence="5">7.6.2.-</ecNumber>
    </recommendedName>
</protein>